<name>RS27A_ARCFU</name>
<comment type="cofactor">
    <cofactor evidence="1">
        <name>Zn(2+)</name>
        <dbReference type="ChEBI" id="CHEBI:29105"/>
    </cofactor>
    <text evidence="1">Binds 1 zinc ion per subunit.</text>
</comment>
<comment type="subunit">
    <text evidence="1">Part of the 30S ribosomal subunit.</text>
</comment>
<comment type="similarity">
    <text evidence="1">Belongs to the eukaryotic ribosomal protein eS31 family.</text>
</comment>
<evidence type="ECO:0000255" key="1">
    <source>
        <dbReference type="HAMAP-Rule" id="MF_00777"/>
    </source>
</evidence>
<evidence type="ECO:0000305" key="2"/>
<reference key="1">
    <citation type="journal article" date="1997" name="Nature">
        <title>The complete genome sequence of the hyperthermophilic, sulphate-reducing archaeon Archaeoglobus fulgidus.</title>
        <authorList>
            <person name="Klenk H.-P."/>
            <person name="Clayton R.A."/>
            <person name="Tomb J.-F."/>
            <person name="White O."/>
            <person name="Nelson K.E."/>
            <person name="Ketchum K.A."/>
            <person name="Dodson R.J."/>
            <person name="Gwinn M.L."/>
            <person name="Hickey E.K."/>
            <person name="Peterson J.D."/>
            <person name="Richardson D.L."/>
            <person name="Kerlavage A.R."/>
            <person name="Graham D.E."/>
            <person name="Kyrpides N.C."/>
            <person name="Fleischmann R.D."/>
            <person name="Quackenbush J."/>
            <person name="Lee N.H."/>
            <person name="Sutton G.G."/>
            <person name="Gill S.R."/>
            <person name="Kirkness E.F."/>
            <person name="Dougherty B.A."/>
            <person name="McKenney K."/>
            <person name="Adams M.D."/>
            <person name="Loftus B.J."/>
            <person name="Peterson S.N."/>
            <person name="Reich C.I."/>
            <person name="McNeil L.K."/>
            <person name="Badger J.H."/>
            <person name="Glodek A."/>
            <person name="Zhou L."/>
            <person name="Overbeek R."/>
            <person name="Gocayne J.D."/>
            <person name="Weidman J.F."/>
            <person name="McDonald L.A."/>
            <person name="Utterback T.R."/>
            <person name="Cotton M.D."/>
            <person name="Spriggs T."/>
            <person name="Artiach P."/>
            <person name="Kaine B.P."/>
            <person name="Sykes S.M."/>
            <person name="Sadow P.W."/>
            <person name="D'Andrea K.P."/>
            <person name="Bowman C."/>
            <person name="Fujii C."/>
            <person name="Garland S.A."/>
            <person name="Mason T.M."/>
            <person name="Olsen G.J."/>
            <person name="Fraser C.M."/>
            <person name="Smith H.O."/>
            <person name="Woese C.R."/>
            <person name="Venter J.C."/>
        </authorList>
    </citation>
    <scope>NUCLEOTIDE SEQUENCE [LARGE SCALE GENOMIC DNA]</scope>
    <source>
        <strain>ATCC 49558 / DSM 4304 / JCM 9628 / NBRC 100126 / VC-16</strain>
    </source>
</reference>
<organism>
    <name type="scientific">Archaeoglobus fulgidus (strain ATCC 49558 / DSM 4304 / JCM 9628 / NBRC 100126 / VC-16)</name>
    <dbReference type="NCBI Taxonomy" id="224325"/>
    <lineage>
        <taxon>Archaea</taxon>
        <taxon>Methanobacteriati</taxon>
        <taxon>Methanobacteriota</taxon>
        <taxon>Archaeoglobi</taxon>
        <taxon>Archaeoglobales</taxon>
        <taxon>Archaeoglobaceae</taxon>
        <taxon>Archaeoglobus</taxon>
    </lineage>
</organism>
<keyword id="KW-0479">Metal-binding</keyword>
<keyword id="KW-1185">Reference proteome</keyword>
<keyword id="KW-0687">Ribonucleoprotein</keyword>
<keyword id="KW-0689">Ribosomal protein</keyword>
<keyword id="KW-0862">Zinc</keyword>
<keyword id="KW-0863">Zinc-finger</keyword>
<sequence length="55" mass="6396">MAKGAESIYRYYEIKGEKVVRKKKFCPRCGEGVFLAEHKDRLSCGKCGYTEFKKK</sequence>
<protein>
    <recommendedName>
        <fullName evidence="1">Small ribosomal subunit protein eS31</fullName>
    </recommendedName>
    <alternativeName>
        <fullName evidence="2">30S ribosomal protein S27ae</fullName>
    </alternativeName>
</protein>
<accession>O29152</accession>
<proteinExistence type="inferred from homology"/>
<gene>
    <name evidence="1" type="primary">rps27ae</name>
    <name type="ordered locus">AF_1113</name>
</gene>
<dbReference type="EMBL" id="AE000782">
    <property type="protein sequence ID" value="AAB90138.1"/>
    <property type="molecule type" value="Genomic_DNA"/>
</dbReference>
<dbReference type="PIR" id="H69388">
    <property type="entry name" value="H69388"/>
</dbReference>
<dbReference type="RefSeq" id="WP_010878609.1">
    <property type="nucleotide sequence ID" value="NC_000917.1"/>
</dbReference>
<dbReference type="SMR" id="O29152"/>
<dbReference type="STRING" id="224325.AF_1113"/>
<dbReference type="PaxDb" id="224325-AF_1113"/>
<dbReference type="EnsemblBacteria" id="AAB90138">
    <property type="protein sequence ID" value="AAB90138"/>
    <property type="gene ID" value="AF_1113"/>
</dbReference>
<dbReference type="KEGG" id="afu:AF_1113"/>
<dbReference type="eggNOG" id="arCOG04183">
    <property type="taxonomic scope" value="Archaea"/>
</dbReference>
<dbReference type="HOGENOM" id="CLU_179743_2_0_2"/>
<dbReference type="OrthoDB" id="25142at2157"/>
<dbReference type="PhylomeDB" id="O29152"/>
<dbReference type="Proteomes" id="UP000002199">
    <property type="component" value="Chromosome"/>
</dbReference>
<dbReference type="GO" id="GO:1990904">
    <property type="term" value="C:ribonucleoprotein complex"/>
    <property type="evidence" value="ECO:0007669"/>
    <property type="project" value="UniProtKB-KW"/>
</dbReference>
<dbReference type="GO" id="GO:0005840">
    <property type="term" value="C:ribosome"/>
    <property type="evidence" value="ECO:0007669"/>
    <property type="project" value="UniProtKB-KW"/>
</dbReference>
<dbReference type="GO" id="GO:0003735">
    <property type="term" value="F:structural constituent of ribosome"/>
    <property type="evidence" value="ECO:0007669"/>
    <property type="project" value="InterPro"/>
</dbReference>
<dbReference type="GO" id="GO:0008270">
    <property type="term" value="F:zinc ion binding"/>
    <property type="evidence" value="ECO:0007669"/>
    <property type="project" value="UniProtKB-UniRule"/>
</dbReference>
<dbReference type="GO" id="GO:0006412">
    <property type="term" value="P:translation"/>
    <property type="evidence" value="ECO:0007669"/>
    <property type="project" value="UniProtKB-UniRule"/>
</dbReference>
<dbReference type="Gene3D" id="6.20.50.180">
    <property type="match status" value="1"/>
</dbReference>
<dbReference type="HAMAP" id="MF_00777">
    <property type="entry name" value="Ribosomal_eS31"/>
    <property type="match status" value="1"/>
</dbReference>
<dbReference type="InterPro" id="IPR002906">
    <property type="entry name" value="Ribosomal_eS31"/>
</dbReference>
<dbReference type="InterPro" id="IPR022845">
    <property type="entry name" value="Ribosomal_eS31_arc"/>
</dbReference>
<dbReference type="InterPro" id="IPR011332">
    <property type="entry name" value="Ribosomal_zn-bd"/>
</dbReference>
<dbReference type="NCBIfam" id="NF001669">
    <property type="entry name" value="PRK00432.1"/>
    <property type="match status" value="1"/>
</dbReference>
<dbReference type="Pfam" id="PF01599">
    <property type="entry name" value="Ribosomal_S27"/>
    <property type="match status" value="1"/>
</dbReference>
<dbReference type="SMART" id="SM01402">
    <property type="entry name" value="Ribosomal_S27"/>
    <property type="match status" value="1"/>
</dbReference>
<dbReference type="SUPFAM" id="SSF57829">
    <property type="entry name" value="Zn-binding ribosomal proteins"/>
    <property type="match status" value="1"/>
</dbReference>
<feature type="chain" id="PRO_0000137690" description="Small ribosomal subunit protein eS31">
    <location>
        <begin position="1"/>
        <end position="55"/>
    </location>
</feature>
<feature type="binding site" evidence="1">
    <location>
        <position position="26"/>
    </location>
    <ligand>
        <name>Zn(2+)</name>
        <dbReference type="ChEBI" id="CHEBI:29105"/>
    </ligand>
</feature>
<feature type="binding site" evidence="1">
    <location>
        <position position="29"/>
    </location>
    <ligand>
        <name>Zn(2+)</name>
        <dbReference type="ChEBI" id="CHEBI:29105"/>
    </ligand>
</feature>
<feature type="binding site" evidence="1">
    <location>
        <position position="44"/>
    </location>
    <ligand>
        <name>Zn(2+)</name>
        <dbReference type="ChEBI" id="CHEBI:29105"/>
    </ligand>
</feature>
<feature type="binding site" evidence="1">
    <location>
        <position position="47"/>
    </location>
    <ligand>
        <name>Zn(2+)</name>
        <dbReference type="ChEBI" id="CHEBI:29105"/>
    </ligand>
</feature>